<proteinExistence type="evidence at protein level"/>
<gene>
    <name type="primary">MYT1</name>
    <name type="synonym">KIAA0835</name>
    <name type="synonym">KIAA1050</name>
    <name type="synonym">MTF1</name>
    <name type="synonym">MYTI</name>
    <name type="synonym">PLPB1</name>
</gene>
<protein>
    <recommendedName>
        <fullName>Myelin transcription factor 1</fullName>
        <shortName>MyT1</shortName>
    </recommendedName>
    <alternativeName>
        <fullName>Myelin transcription factor I</fullName>
        <shortName>MyTI</shortName>
    </alternativeName>
    <alternativeName>
        <fullName>PLPB1</fullName>
    </alternativeName>
    <alternativeName>
        <fullName>Proteolipid protein-binding protein</fullName>
    </alternativeName>
</protein>
<accession>Q01538</accession>
<accession>E1P5H0</accession>
<accession>F5H7M8</accession>
<accession>O94922</accession>
<accession>Q7Z5W2</accession>
<accession>Q9UPV2</accession>
<feature type="chain" id="PRO_0000096676" description="Myelin transcription factor 1">
    <location>
        <begin position="1"/>
        <end position="1121"/>
    </location>
</feature>
<feature type="zinc finger region" description="CCHHC-type 1" evidence="1">
    <location>
        <begin position="21"/>
        <end position="64"/>
    </location>
</feature>
<feature type="zinc finger region" description="CCHHC-type 2" evidence="1">
    <location>
        <begin position="433"/>
        <end position="476"/>
    </location>
</feature>
<feature type="zinc finger region" description="CCHHC-type 3" evidence="1">
    <location>
        <begin position="477"/>
        <end position="520"/>
    </location>
</feature>
<feature type="zinc finger region" description="CCHHC-type 4" evidence="1">
    <location>
        <begin position="791"/>
        <end position="834"/>
    </location>
</feature>
<feature type="zinc finger region" description="CCHHC-type 5" evidence="1">
    <location>
        <begin position="835"/>
        <end position="878"/>
    </location>
</feature>
<feature type="zinc finger region" description="CCHHC-type 6" evidence="1">
    <location>
        <begin position="884"/>
        <end position="927"/>
    </location>
</feature>
<feature type="zinc finger region" description="CCHHC-type 7" evidence="1">
    <location>
        <begin position="937"/>
        <end position="980"/>
    </location>
</feature>
<feature type="region of interest" description="Disordered" evidence="2">
    <location>
        <begin position="1"/>
        <end position="156"/>
    </location>
</feature>
<feature type="region of interest" description="Disordered" evidence="2">
    <location>
        <begin position="200"/>
        <end position="376"/>
    </location>
</feature>
<feature type="region of interest" description="Disordered" evidence="2">
    <location>
        <begin position="517"/>
        <end position="540"/>
    </location>
</feature>
<feature type="region of interest" description="Disordered" evidence="2">
    <location>
        <begin position="668"/>
        <end position="774"/>
    </location>
</feature>
<feature type="compositionally biased region" description="Basic residues" evidence="2">
    <location>
        <begin position="41"/>
        <end position="50"/>
    </location>
</feature>
<feature type="compositionally biased region" description="Basic and acidic residues" evidence="2">
    <location>
        <begin position="62"/>
        <end position="71"/>
    </location>
</feature>
<feature type="compositionally biased region" description="Basic and acidic residues" evidence="2">
    <location>
        <begin position="123"/>
        <end position="132"/>
    </location>
</feature>
<feature type="compositionally biased region" description="Low complexity" evidence="2">
    <location>
        <begin position="147"/>
        <end position="156"/>
    </location>
</feature>
<feature type="compositionally biased region" description="Acidic residues" evidence="2">
    <location>
        <begin position="258"/>
        <end position="308"/>
    </location>
</feature>
<feature type="compositionally biased region" description="Basic and acidic residues" evidence="2">
    <location>
        <begin position="346"/>
        <end position="358"/>
    </location>
</feature>
<feature type="compositionally biased region" description="Polar residues" evidence="2">
    <location>
        <begin position="526"/>
        <end position="540"/>
    </location>
</feature>
<feature type="compositionally biased region" description="Low complexity" evidence="2">
    <location>
        <begin position="705"/>
        <end position="723"/>
    </location>
</feature>
<feature type="compositionally biased region" description="Basic and acidic residues" evidence="2">
    <location>
        <begin position="724"/>
        <end position="733"/>
    </location>
</feature>
<feature type="compositionally biased region" description="Acidic residues" evidence="2">
    <location>
        <begin position="759"/>
        <end position="770"/>
    </location>
</feature>
<feature type="binding site" evidence="1">
    <location>
        <position position="30"/>
    </location>
    <ligand>
        <name>Zn(2+)</name>
        <dbReference type="ChEBI" id="CHEBI:29105"/>
        <label>1</label>
    </ligand>
</feature>
<feature type="binding site" evidence="1">
    <location>
        <position position="35"/>
    </location>
    <ligand>
        <name>Zn(2+)</name>
        <dbReference type="ChEBI" id="CHEBI:29105"/>
        <label>1</label>
    </ligand>
</feature>
<feature type="binding site" evidence="1">
    <location>
        <position position="48"/>
    </location>
    <ligand>
        <name>Zn(2+)</name>
        <dbReference type="ChEBI" id="CHEBI:29105"/>
        <label>1</label>
    </ligand>
</feature>
<feature type="binding site" evidence="1">
    <location>
        <position position="54"/>
    </location>
    <ligand>
        <name>Zn(2+)</name>
        <dbReference type="ChEBI" id="CHEBI:29105"/>
        <label>1</label>
    </ligand>
</feature>
<feature type="binding site" evidence="1">
    <location>
        <position position="442"/>
    </location>
    <ligand>
        <name>Zn(2+)</name>
        <dbReference type="ChEBI" id="CHEBI:29105"/>
        <label>2</label>
    </ligand>
</feature>
<feature type="binding site" evidence="1">
    <location>
        <position position="447"/>
    </location>
    <ligand>
        <name>Zn(2+)</name>
        <dbReference type="ChEBI" id="CHEBI:29105"/>
        <label>2</label>
    </ligand>
</feature>
<feature type="binding site" evidence="1">
    <location>
        <position position="460"/>
    </location>
    <ligand>
        <name>Zn(2+)</name>
        <dbReference type="ChEBI" id="CHEBI:29105"/>
        <label>2</label>
    </ligand>
</feature>
<feature type="binding site" evidence="1">
    <location>
        <position position="466"/>
    </location>
    <ligand>
        <name>Zn(2+)</name>
        <dbReference type="ChEBI" id="CHEBI:29105"/>
        <label>2</label>
    </ligand>
</feature>
<feature type="binding site" evidence="1">
    <location>
        <position position="486"/>
    </location>
    <ligand>
        <name>Zn(2+)</name>
        <dbReference type="ChEBI" id="CHEBI:29105"/>
        <label>3</label>
    </ligand>
</feature>
<feature type="binding site" evidence="1">
    <location>
        <position position="491"/>
    </location>
    <ligand>
        <name>Zn(2+)</name>
        <dbReference type="ChEBI" id="CHEBI:29105"/>
        <label>3</label>
    </ligand>
</feature>
<feature type="binding site" evidence="1">
    <location>
        <position position="504"/>
    </location>
    <ligand>
        <name>Zn(2+)</name>
        <dbReference type="ChEBI" id="CHEBI:29105"/>
        <label>3</label>
    </ligand>
</feature>
<feature type="binding site" evidence="1">
    <location>
        <position position="510"/>
    </location>
    <ligand>
        <name>Zn(2+)</name>
        <dbReference type="ChEBI" id="CHEBI:29105"/>
        <label>3</label>
    </ligand>
</feature>
<feature type="binding site" evidence="1">
    <location>
        <position position="800"/>
    </location>
    <ligand>
        <name>Zn(2+)</name>
        <dbReference type="ChEBI" id="CHEBI:29105"/>
        <label>4</label>
    </ligand>
</feature>
<feature type="binding site" evidence="1">
    <location>
        <position position="805"/>
    </location>
    <ligand>
        <name>Zn(2+)</name>
        <dbReference type="ChEBI" id="CHEBI:29105"/>
        <label>4</label>
    </ligand>
</feature>
<feature type="binding site" evidence="1">
    <location>
        <position position="818"/>
    </location>
    <ligand>
        <name>Zn(2+)</name>
        <dbReference type="ChEBI" id="CHEBI:29105"/>
        <label>4</label>
    </ligand>
</feature>
<feature type="binding site" evidence="1">
    <location>
        <position position="824"/>
    </location>
    <ligand>
        <name>Zn(2+)</name>
        <dbReference type="ChEBI" id="CHEBI:29105"/>
        <label>4</label>
    </ligand>
</feature>
<feature type="binding site" evidence="1">
    <location>
        <position position="844"/>
    </location>
    <ligand>
        <name>Zn(2+)</name>
        <dbReference type="ChEBI" id="CHEBI:29105"/>
        <label>5</label>
    </ligand>
</feature>
<feature type="binding site" evidence="1">
    <location>
        <position position="849"/>
    </location>
    <ligand>
        <name>Zn(2+)</name>
        <dbReference type="ChEBI" id="CHEBI:29105"/>
        <label>5</label>
    </ligand>
</feature>
<feature type="binding site" evidence="1">
    <location>
        <position position="862"/>
    </location>
    <ligand>
        <name>Zn(2+)</name>
        <dbReference type="ChEBI" id="CHEBI:29105"/>
        <label>5</label>
    </ligand>
</feature>
<feature type="binding site" evidence="1">
    <location>
        <position position="868"/>
    </location>
    <ligand>
        <name>Zn(2+)</name>
        <dbReference type="ChEBI" id="CHEBI:29105"/>
        <label>5</label>
    </ligand>
</feature>
<feature type="binding site" evidence="1">
    <location>
        <position position="893"/>
    </location>
    <ligand>
        <name>Zn(2+)</name>
        <dbReference type="ChEBI" id="CHEBI:29105"/>
        <label>6</label>
    </ligand>
</feature>
<feature type="binding site" evidence="1">
    <location>
        <position position="898"/>
    </location>
    <ligand>
        <name>Zn(2+)</name>
        <dbReference type="ChEBI" id="CHEBI:29105"/>
        <label>6</label>
    </ligand>
</feature>
<feature type="binding site" evidence="1">
    <location>
        <position position="911"/>
    </location>
    <ligand>
        <name>Zn(2+)</name>
        <dbReference type="ChEBI" id="CHEBI:29105"/>
        <label>6</label>
    </ligand>
</feature>
<feature type="binding site" evidence="1">
    <location>
        <position position="917"/>
    </location>
    <ligand>
        <name>Zn(2+)</name>
        <dbReference type="ChEBI" id="CHEBI:29105"/>
        <label>6</label>
    </ligand>
</feature>
<feature type="binding site" evidence="1">
    <location>
        <position position="946"/>
    </location>
    <ligand>
        <name>Zn(2+)</name>
        <dbReference type="ChEBI" id="CHEBI:29105"/>
        <label>7</label>
    </ligand>
</feature>
<feature type="binding site" evidence="1">
    <location>
        <position position="951"/>
    </location>
    <ligand>
        <name>Zn(2+)</name>
        <dbReference type="ChEBI" id="CHEBI:29105"/>
        <label>7</label>
    </ligand>
</feature>
<feature type="binding site" evidence="1">
    <location>
        <position position="964"/>
    </location>
    <ligand>
        <name>Zn(2+)</name>
        <dbReference type="ChEBI" id="CHEBI:29105"/>
        <label>7</label>
    </ligand>
</feature>
<feature type="binding site" evidence="1">
    <location>
        <position position="970"/>
    </location>
    <ligand>
        <name>Zn(2+)</name>
        <dbReference type="ChEBI" id="CHEBI:29105"/>
        <label>7</label>
    </ligand>
</feature>
<feature type="splice variant" id="VSP_054313" description="In isoform 2." evidence="6 7">
    <original>C</original>
    <variation>SKPFPKASSPRHSPSSSYVRSTSSSSAG</variation>
    <location>
        <position position="616"/>
    </location>
</feature>
<feature type="sequence conflict" description="In Ref. 6; AAA59897." evidence="8" ref="6">
    <original>ATPRANLA</original>
    <variation>RHTQGQLG</variation>
    <location>
        <begin position="567"/>
        <end position="574"/>
    </location>
</feature>
<feature type="sequence conflict" description="In Ref. 6; AAA59897." evidence="8" ref="6">
    <original>A</original>
    <variation>T</variation>
    <location>
        <position position="837"/>
    </location>
</feature>
<feature type="sequence conflict" description="In Ref. 6; AAA59897." evidence="8" ref="6">
    <original>G</original>
    <variation>D</variation>
    <location>
        <position position="943"/>
    </location>
</feature>
<feature type="sequence conflict" description="In Ref. 6; AAA59897." evidence="8" ref="6">
    <original>AN</original>
    <variation>TI</variation>
    <location>
        <begin position="957"/>
        <end position="958"/>
    </location>
</feature>
<feature type="sequence conflict" description="In Ref. 6; AAA59897." evidence="8" ref="6">
    <original>R</original>
    <variation>H</variation>
    <location>
        <position position="1075"/>
    </location>
</feature>
<feature type="sequence conflict" description="In Ref. 6; AAA59897." evidence="8" ref="6">
    <original>DA</original>
    <variation>VP</variation>
    <location>
        <begin position="1088"/>
        <end position="1089"/>
    </location>
</feature>
<feature type="sequence conflict" description="In Ref. 6; AAA59897." evidence="8" ref="6">
    <original>D</original>
    <variation>A</variation>
    <location>
        <position position="1102"/>
    </location>
</feature>
<organism>
    <name type="scientific">Homo sapiens</name>
    <name type="common">Human</name>
    <dbReference type="NCBI Taxonomy" id="9606"/>
    <lineage>
        <taxon>Eukaryota</taxon>
        <taxon>Metazoa</taxon>
        <taxon>Chordata</taxon>
        <taxon>Craniata</taxon>
        <taxon>Vertebrata</taxon>
        <taxon>Euteleostomi</taxon>
        <taxon>Mammalia</taxon>
        <taxon>Eutheria</taxon>
        <taxon>Euarchontoglires</taxon>
        <taxon>Primates</taxon>
        <taxon>Haplorrhini</taxon>
        <taxon>Catarrhini</taxon>
        <taxon>Hominidae</taxon>
        <taxon>Homo</taxon>
    </lineage>
</organism>
<dbReference type="EMBL" id="AB020642">
    <property type="protein sequence ID" value="BAA74858.2"/>
    <property type="status" value="ALT_INIT"/>
    <property type="molecule type" value="mRNA"/>
</dbReference>
<dbReference type="EMBL" id="AL121581">
    <property type="status" value="NOT_ANNOTATED_CDS"/>
    <property type="molecule type" value="Genomic_DNA"/>
</dbReference>
<dbReference type="EMBL" id="CH471077">
    <property type="protein sequence ID" value="EAW75155.1"/>
    <property type="molecule type" value="Genomic_DNA"/>
</dbReference>
<dbReference type="EMBL" id="CH471077">
    <property type="protein sequence ID" value="EAW75157.1"/>
    <property type="molecule type" value="Genomic_DNA"/>
</dbReference>
<dbReference type="EMBL" id="CH471077">
    <property type="protein sequence ID" value="EAW75158.1"/>
    <property type="molecule type" value="Genomic_DNA"/>
</dbReference>
<dbReference type="EMBL" id="AB028973">
    <property type="protein sequence ID" value="BAA83002.1"/>
    <property type="molecule type" value="mRNA"/>
</dbReference>
<dbReference type="EMBL" id="BC053638">
    <property type="protein sequence ID" value="AAH53638.1"/>
    <property type="molecule type" value="mRNA"/>
</dbReference>
<dbReference type="EMBL" id="M96980">
    <property type="protein sequence ID" value="AAA59897.1"/>
    <property type="molecule type" value="mRNA"/>
</dbReference>
<dbReference type="CCDS" id="CCDS13558.1">
    <molecule id="Q01538-1"/>
</dbReference>
<dbReference type="RefSeq" id="NP_004526.1">
    <molecule id="Q01538-1"/>
    <property type="nucleotide sequence ID" value="NM_004535.3"/>
</dbReference>
<dbReference type="PDB" id="7Q45">
    <property type="method" value="X-ray"/>
    <property type="resolution" value="2.10 A"/>
    <property type="chains" value="B/D/F=347-360"/>
</dbReference>
<dbReference type="PDBsum" id="7Q45"/>
<dbReference type="SMR" id="Q01538"/>
<dbReference type="BioGRID" id="110744">
    <property type="interactions" value="11"/>
</dbReference>
<dbReference type="FunCoup" id="Q01538">
    <property type="interactions" value="1801"/>
</dbReference>
<dbReference type="IntAct" id="Q01538">
    <property type="interactions" value="7"/>
</dbReference>
<dbReference type="MINT" id="Q01538"/>
<dbReference type="STRING" id="9606.ENSP00000498616"/>
<dbReference type="BindingDB" id="Q01538"/>
<dbReference type="ChEMBL" id="CHEMBL2331044"/>
<dbReference type="DrugCentral" id="Q01538"/>
<dbReference type="GlyGen" id="Q01538">
    <property type="glycosylation" value="6 sites"/>
</dbReference>
<dbReference type="iPTMnet" id="Q01538"/>
<dbReference type="PhosphoSitePlus" id="Q01538"/>
<dbReference type="BioMuta" id="MYT1"/>
<dbReference type="DMDM" id="13638422"/>
<dbReference type="MassIVE" id="Q01538"/>
<dbReference type="PaxDb" id="9606-ENSP00000327465"/>
<dbReference type="PeptideAtlas" id="Q01538"/>
<dbReference type="ProteomicsDB" id="27533"/>
<dbReference type="ProteomicsDB" id="57968">
    <molecule id="Q01538-1"/>
</dbReference>
<dbReference type="Antibodypedia" id="1424">
    <property type="antibodies" value="295 antibodies from 26 providers"/>
</dbReference>
<dbReference type="DNASU" id="4661"/>
<dbReference type="Ensembl" id="ENST00000328439.6">
    <molecule id="Q01538-1"/>
    <property type="protein sequence ID" value="ENSP00000327465.1"/>
    <property type="gene ID" value="ENSG00000196132.14"/>
</dbReference>
<dbReference type="Ensembl" id="ENST00000536311.5">
    <molecule id="Q01538-2"/>
    <property type="protein sequence ID" value="ENSP00000442412.1"/>
    <property type="gene ID" value="ENSG00000196132.14"/>
</dbReference>
<dbReference type="Ensembl" id="ENST00000613234.3">
    <molecule id="Q01538-1"/>
    <property type="protein sequence ID" value="ENSP00000477771.2"/>
    <property type="gene ID" value="ENSG00000276876.4"/>
</dbReference>
<dbReference type="Ensembl" id="ENST00000616648.2">
    <molecule id="Q01538-2"/>
    <property type="protein sequence ID" value="ENSP00000483021.1"/>
    <property type="gene ID" value="ENSG00000276876.4"/>
</dbReference>
<dbReference type="Ensembl" id="ENST00000650655.1">
    <molecule id="Q01538-1"/>
    <property type="protein sequence ID" value="ENSP00000498616.1"/>
    <property type="gene ID" value="ENSG00000196132.14"/>
</dbReference>
<dbReference type="GeneID" id="4661"/>
<dbReference type="KEGG" id="hsa:4661"/>
<dbReference type="MANE-Select" id="ENST00000328439.6">
    <property type="protein sequence ID" value="ENSP00000327465.1"/>
    <property type="RefSeq nucleotide sequence ID" value="NM_004535.3"/>
    <property type="RefSeq protein sequence ID" value="NP_004526.1"/>
</dbReference>
<dbReference type="UCSC" id="uc002yii.3">
    <molecule id="Q01538-1"/>
    <property type="organism name" value="human"/>
</dbReference>
<dbReference type="AGR" id="HGNC:7622"/>
<dbReference type="CTD" id="4661"/>
<dbReference type="DisGeNET" id="4661"/>
<dbReference type="GeneCards" id="MYT1"/>
<dbReference type="HGNC" id="HGNC:7622">
    <property type="gene designation" value="MYT1"/>
</dbReference>
<dbReference type="HPA" id="ENSG00000196132">
    <property type="expression patterns" value="Tissue enriched (brain)"/>
</dbReference>
<dbReference type="MalaCards" id="MYT1"/>
<dbReference type="MIM" id="600379">
    <property type="type" value="gene"/>
</dbReference>
<dbReference type="neXtProt" id="NX_Q01538"/>
<dbReference type="OpenTargets" id="ENSG00000196132"/>
<dbReference type="PharmGKB" id="PA31426"/>
<dbReference type="VEuPathDB" id="HostDB:ENSG00000196132"/>
<dbReference type="eggNOG" id="KOG3803">
    <property type="taxonomic scope" value="Eukaryota"/>
</dbReference>
<dbReference type="GeneTree" id="ENSGT00940000156364"/>
<dbReference type="HOGENOM" id="CLU_007226_0_0_1"/>
<dbReference type="InParanoid" id="Q01538"/>
<dbReference type="OMA" id="APDVIFE"/>
<dbReference type="OrthoDB" id="10069059at2759"/>
<dbReference type="PAN-GO" id="Q01538">
    <property type="GO annotations" value="4 GO annotations based on evolutionary models"/>
</dbReference>
<dbReference type="PhylomeDB" id="Q01538"/>
<dbReference type="TreeFam" id="TF317299"/>
<dbReference type="PathwayCommons" id="Q01538"/>
<dbReference type="SignaLink" id="Q01538"/>
<dbReference type="SIGNOR" id="Q01538"/>
<dbReference type="BioGRID-ORCS" id="4661">
    <property type="hits" value="20 hits in 1175 CRISPR screens"/>
</dbReference>
<dbReference type="GeneWiki" id="MYT1"/>
<dbReference type="GenomeRNAi" id="4661"/>
<dbReference type="Pharos" id="Q01538">
    <property type="development level" value="Tchem"/>
</dbReference>
<dbReference type="PRO" id="PR:Q01538"/>
<dbReference type="Proteomes" id="UP000005640">
    <property type="component" value="Chromosome 20"/>
</dbReference>
<dbReference type="RNAct" id="Q01538">
    <property type="molecule type" value="protein"/>
</dbReference>
<dbReference type="Bgee" id="ENSG00000196132">
    <property type="expression patterns" value="Expressed in ganglionic eminence and 81 other cell types or tissues"/>
</dbReference>
<dbReference type="ExpressionAtlas" id="Q01538">
    <property type="expression patterns" value="baseline and differential"/>
</dbReference>
<dbReference type="GO" id="GO:0000785">
    <property type="term" value="C:chromatin"/>
    <property type="evidence" value="ECO:0000247"/>
    <property type="project" value="NTNU_SB"/>
</dbReference>
<dbReference type="GO" id="GO:0005829">
    <property type="term" value="C:cytosol"/>
    <property type="evidence" value="ECO:0000314"/>
    <property type="project" value="HPA"/>
</dbReference>
<dbReference type="GO" id="GO:0005654">
    <property type="term" value="C:nucleoplasm"/>
    <property type="evidence" value="ECO:0000314"/>
    <property type="project" value="HPA"/>
</dbReference>
<dbReference type="GO" id="GO:0005634">
    <property type="term" value="C:nucleus"/>
    <property type="evidence" value="ECO:0000303"/>
    <property type="project" value="UniProtKB"/>
</dbReference>
<dbReference type="GO" id="GO:0003677">
    <property type="term" value="F:DNA binding"/>
    <property type="evidence" value="ECO:0007669"/>
    <property type="project" value="UniProtKB-KW"/>
</dbReference>
<dbReference type="GO" id="GO:0003700">
    <property type="term" value="F:DNA-binding transcription factor activity"/>
    <property type="evidence" value="ECO:0000303"/>
    <property type="project" value="UniProtKB"/>
</dbReference>
<dbReference type="GO" id="GO:0000981">
    <property type="term" value="F:DNA-binding transcription factor activity, RNA polymerase II-specific"/>
    <property type="evidence" value="ECO:0000247"/>
    <property type="project" value="NTNU_SB"/>
</dbReference>
<dbReference type="GO" id="GO:0008270">
    <property type="term" value="F:zinc ion binding"/>
    <property type="evidence" value="ECO:0000303"/>
    <property type="project" value="UniProtKB"/>
</dbReference>
<dbReference type="GO" id="GO:0030154">
    <property type="term" value="P:cell differentiation"/>
    <property type="evidence" value="ECO:0007669"/>
    <property type="project" value="UniProtKB-KW"/>
</dbReference>
<dbReference type="GO" id="GO:0007399">
    <property type="term" value="P:nervous system development"/>
    <property type="evidence" value="ECO:0007669"/>
    <property type="project" value="UniProtKB-KW"/>
</dbReference>
<dbReference type="GO" id="GO:0006355">
    <property type="term" value="P:regulation of DNA-templated transcription"/>
    <property type="evidence" value="ECO:0000303"/>
    <property type="project" value="UniProtKB"/>
</dbReference>
<dbReference type="FunFam" id="4.10.320.30:FF:000001">
    <property type="entry name" value="Myelin transcription factor 1-like, a"/>
    <property type="match status" value="7"/>
</dbReference>
<dbReference type="Gene3D" id="4.10.320.30">
    <property type="match status" value="7"/>
</dbReference>
<dbReference type="InterPro" id="IPR013681">
    <property type="entry name" value="Myelin_TF"/>
</dbReference>
<dbReference type="InterPro" id="IPR002515">
    <property type="entry name" value="Znf_C2H2C"/>
</dbReference>
<dbReference type="InterPro" id="IPR036060">
    <property type="entry name" value="Znf_C2H2C_sf"/>
</dbReference>
<dbReference type="PANTHER" id="PTHR10816:SF15">
    <property type="entry name" value="MYELIN TRANSCRIPTION FACTOR 1-LIKE PROTEIN"/>
    <property type="match status" value="1"/>
</dbReference>
<dbReference type="PANTHER" id="PTHR10816">
    <property type="entry name" value="MYELIN TRANSCRIPTION FACTOR 1-RELATED"/>
    <property type="match status" value="1"/>
</dbReference>
<dbReference type="Pfam" id="PF08474">
    <property type="entry name" value="MYT1"/>
    <property type="match status" value="2"/>
</dbReference>
<dbReference type="Pfam" id="PF01530">
    <property type="entry name" value="zf-C2HC"/>
    <property type="match status" value="7"/>
</dbReference>
<dbReference type="SUPFAM" id="SSF103637">
    <property type="entry name" value="CCHHC domain"/>
    <property type="match status" value="7"/>
</dbReference>
<dbReference type="PROSITE" id="PS51802">
    <property type="entry name" value="ZF_CCHHC"/>
    <property type="match status" value="7"/>
</dbReference>
<sequence length="1121" mass="122329">MSLENEDKRARTRSKALRGPPETTAADLSCPTPGCTGSGHVRGKYSRHRSLQSCPLAKKRKLEGAEAEHLVSKRKSHPLKLALDEGYGVDSDGSEDTEVKDASVSDESEGTLEGAEAETSGQDEIHRPETAEGRSPVKSHFGSNPIGSATASSKGSYSSYQGIIATSLLNLGQIAEETLVEEDLGQAAKPGPGIVHLLQEAAEGAASEEGEKGLFIQPEDAEEVVEVTTERSQDLCPQSLEDAASEESSKQKGILSHEEEDEEEEEEEEEEEEDEEEEEEEEEEEEEEEEEEEEEEEEEEEEEEEEAAPDVIFQEDTSHTSAQKAPELRGPESPSPKPEYSVIVEVRSDDDKDEDTHSRKSTVTDESEMQDMMTRGNLGLLEQAIALKAEQVRTVCEPGCPPAEQSQLGLGEPGKAAKPLDTVRKSYYSKDPSRAEKREIKCPTPGCDGTGHVTGLYPHHRSLSGCPHKDRIPPEILAMHENVLKCPTPGCTGQGHVNSNRNTHRSLSGCPIAAAEKLAKSHEKQQPQTGDPSKSSSNSDRILRPMCFVKQLEVPPYGSYRPNVAPATPRANLAKELEKFSKVTFDYASFDAQVFGKRMLAPKIQTSETSPKAFQCFDYSQDAEAAHMAATAILNLSTRCWEMPENLSTKPQDLPSKSVDIEVDENGTLDLSMHKHRKRENAFPSSSSCSSSPGVKSPDASQRHSSTSAPSSSMTSPQSSQASRQDEWDRPLDYTKPSRLREEEPEESEPAAHSFASSEADDQEVSEENFEERKYPGEVTLTNFKLKFLSKDIKKELLTCPTPGCDGSGHITGNYASHRSLSGCPLADKSLRNLMAAHSADLKCPTPGCDGSGHITGNYASHRSLSGCPRAKKSGVKVAPTKDDKEDPELMKCPVPGCVGLGHISGKYASHRSASGCPLAARRQKEGSLNGSSFSWKSLKNEGPTCPTPGCDGSGHANGSFLTHRSLSGCPRATFAGKKGKLSGDEVLSPKFKTSDVLENDEEIKQLNQEIRDLNESNSEMEAAMVQLQSQISSMEKNLKNIEEENKLIEEQNEALFLELSGLSQALIQSLANIRLPHMEPICEQNFDAYVSTLTDMYSNQDPENKDLLESIKQAVRGIQV</sequence>
<keyword id="KW-0002">3D-structure</keyword>
<keyword id="KW-0025">Alternative splicing</keyword>
<keyword id="KW-0217">Developmental protein</keyword>
<keyword id="KW-0221">Differentiation</keyword>
<keyword id="KW-0238">DNA-binding</keyword>
<keyword id="KW-0479">Metal-binding</keyword>
<keyword id="KW-0524">Neurogenesis</keyword>
<keyword id="KW-0539">Nucleus</keyword>
<keyword id="KW-1267">Proteomics identification</keyword>
<keyword id="KW-1185">Reference proteome</keyword>
<keyword id="KW-0677">Repeat</keyword>
<keyword id="KW-0804">Transcription</keyword>
<keyword id="KW-0805">Transcription regulation</keyword>
<keyword id="KW-0862">Zinc</keyword>
<keyword id="KW-0863">Zinc-finger</keyword>
<reference key="1">
    <citation type="journal article" date="1998" name="DNA Res.">
        <title>Prediction of the coding sequences of unidentified human genes. XII. The complete sequences of 100 new cDNA clones from brain which code for large proteins in vitro.</title>
        <authorList>
            <person name="Nagase T."/>
            <person name="Ishikawa K."/>
            <person name="Suyama M."/>
            <person name="Kikuno R."/>
            <person name="Hirosawa M."/>
            <person name="Miyajima N."/>
            <person name="Tanaka A."/>
            <person name="Kotani H."/>
            <person name="Nomura N."/>
            <person name="Ohara O."/>
        </authorList>
    </citation>
    <scope>NUCLEOTIDE SEQUENCE [LARGE SCALE MRNA] (ISOFORM 1)</scope>
    <source>
        <tissue>Brain</tissue>
    </source>
</reference>
<reference key="2">
    <citation type="journal article" date="2001" name="Nature">
        <title>The DNA sequence and comparative analysis of human chromosome 20.</title>
        <authorList>
            <person name="Deloukas P."/>
            <person name="Matthews L.H."/>
            <person name="Ashurst J.L."/>
            <person name="Burton J."/>
            <person name="Gilbert J.G.R."/>
            <person name="Jones M."/>
            <person name="Stavrides G."/>
            <person name="Almeida J.P."/>
            <person name="Babbage A.K."/>
            <person name="Bagguley C.L."/>
            <person name="Bailey J."/>
            <person name="Barlow K.F."/>
            <person name="Bates K.N."/>
            <person name="Beard L.M."/>
            <person name="Beare D.M."/>
            <person name="Beasley O.P."/>
            <person name="Bird C.P."/>
            <person name="Blakey S.E."/>
            <person name="Bridgeman A.M."/>
            <person name="Brown A.J."/>
            <person name="Buck D."/>
            <person name="Burrill W.D."/>
            <person name="Butler A.P."/>
            <person name="Carder C."/>
            <person name="Carter N.P."/>
            <person name="Chapman J.C."/>
            <person name="Clamp M."/>
            <person name="Clark G."/>
            <person name="Clark L.N."/>
            <person name="Clark S.Y."/>
            <person name="Clee C.M."/>
            <person name="Clegg S."/>
            <person name="Cobley V.E."/>
            <person name="Collier R.E."/>
            <person name="Connor R.E."/>
            <person name="Corby N.R."/>
            <person name="Coulson A."/>
            <person name="Coville G.J."/>
            <person name="Deadman R."/>
            <person name="Dhami P.D."/>
            <person name="Dunn M."/>
            <person name="Ellington A.G."/>
            <person name="Frankland J.A."/>
            <person name="Fraser A."/>
            <person name="French L."/>
            <person name="Garner P."/>
            <person name="Grafham D.V."/>
            <person name="Griffiths C."/>
            <person name="Griffiths M.N.D."/>
            <person name="Gwilliam R."/>
            <person name="Hall R.E."/>
            <person name="Hammond S."/>
            <person name="Harley J.L."/>
            <person name="Heath P.D."/>
            <person name="Ho S."/>
            <person name="Holden J.L."/>
            <person name="Howden P.J."/>
            <person name="Huckle E."/>
            <person name="Hunt A.R."/>
            <person name="Hunt S.E."/>
            <person name="Jekosch K."/>
            <person name="Johnson C.M."/>
            <person name="Johnson D."/>
            <person name="Kay M.P."/>
            <person name="Kimberley A.M."/>
            <person name="King A."/>
            <person name="Knights A."/>
            <person name="Laird G.K."/>
            <person name="Lawlor S."/>
            <person name="Lehvaeslaiho M.H."/>
            <person name="Leversha M.A."/>
            <person name="Lloyd C."/>
            <person name="Lloyd D.M."/>
            <person name="Lovell J.D."/>
            <person name="Marsh V.L."/>
            <person name="Martin S.L."/>
            <person name="McConnachie L.J."/>
            <person name="McLay K."/>
            <person name="McMurray A.A."/>
            <person name="Milne S.A."/>
            <person name="Mistry D."/>
            <person name="Moore M.J.F."/>
            <person name="Mullikin J.C."/>
            <person name="Nickerson T."/>
            <person name="Oliver K."/>
            <person name="Parker A."/>
            <person name="Patel R."/>
            <person name="Pearce T.A.V."/>
            <person name="Peck A.I."/>
            <person name="Phillimore B.J.C.T."/>
            <person name="Prathalingam S.R."/>
            <person name="Plumb R.W."/>
            <person name="Ramsay H."/>
            <person name="Rice C.M."/>
            <person name="Ross M.T."/>
            <person name="Scott C.E."/>
            <person name="Sehra H.K."/>
            <person name="Shownkeen R."/>
            <person name="Sims S."/>
            <person name="Skuce C.D."/>
            <person name="Smith M.L."/>
            <person name="Soderlund C."/>
            <person name="Steward C.A."/>
            <person name="Sulston J.E."/>
            <person name="Swann R.M."/>
            <person name="Sycamore N."/>
            <person name="Taylor R."/>
            <person name="Tee L."/>
            <person name="Thomas D.W."/>
            <person name="Thorpe A."/>
            <person name="Tracey A."/>
            <person name="Tromans A.C."/>
            <person name="Vaudin M."/>
            <person name="Wall M."/>
            <person name="Wallis J.M."/>
            <person name="Whitehead S.L."/>
            <person name="Whittaker P."/>
            <person name="Willey D.L."/>
            <person name="Williams L."/>
            <person name="Williams S.A."/>
            <person name="Wilming L."/>
            <person name="Wray P.W."/>
            <person name="Hubbard T."/>
            <person name="Durbin R.M."/>
            <person name="Bentley D.R."/>
            <person name="Beck S."/>
            <person name="Rogers J."/>
        </authorList>
    </citation>
    <scope>NUCLEOTIDE SEQUENCE [LARGE SCALE GENOMIC DNA]</scope>
</reference>
<reference key="3">
    <citation type="submission" date="2005-09" db="EMBL/GenBank/DDBJ databases">
        <authorList>
            <person name="Mural R.J."/>
            <person name="Istrail S."/>
            <person name="Sutton G.G."/>
            <person name="Florea L."/>
            <person name="Halpern A.L."/>
            <person name="Mobarry C.M."/>
            <person name="Lippert R."/>
            <person name="Walenz B."/>
            <person name="Shatkay H."/>
            <person name="Dew I."/>
            <person name="Miller J.R."/>
            <person name="Flanigan M.J."/>
            <person name="Edwards N.J."/>
            <person name="Bolanos R."/>
            <person name="Fasulo D."/>
            <person name="Halldorsson B.V."/>
            <person name="Hannenhalli S."/>
            <person name="Turner R."/>
            <person name="Yooseph S."/>
            <person name="Lu F."/>
            <person name="Nusskern D.R."/>
            <person name="Shue B.C."/>
            <person name="Zheng X.H."/>
            <person name="Zhong F."/>
            <person name="Delcher A.L."/>
            <person name="Huson D.H."/>
            <person name="Kravitz S.A."/>
            <person name="Mouchard L."/>
            <person name="Reinert K."/>
            <person name="Remington K.A."/>
            <person name="Clark A.G."/>
            <person name="Waterman M.S."/>
            <person name="Eichler E.E."/>
            <person name="Adams M.D."/>
            <person name="Hunkapiller M.W."/>
            <person name="Myers E.W."/>
            <person name="Venter J.C."/>
        </authorList>
    </citation>
    <scope>NUCLEOTIDE SEQUENCE [LARGE SCALE GENOMIC DNA]</scope>
</reference>
<reference key="4">
    <citation type="journal article" date="1999" name="DNA Res.">
        <title>Prediction of the coding sequences of unidentified human genes. XIV. The complete sequences of 100 new cDNA clones from brain which code for large proteins in vitro.</title>
        <authorList>
            <person name="Kikuno R."/>
            <person name="Nagase T."/>
            <person name="Ishikawa K."/>
            <person name="Hirosawa M."/>
            <person name="Miyajima N."/>
            <person name="Tanaka A."/>
            <person name="Kotani H."/>
            <person name="Nomura N."/>
            <person name="Ohara O."/>
        </authorList>
    </citation>
    <scope>NUCLEOTIDE SEQUENCE [LARGE SCALE MRNA] OF 293-1121 (ISOFORM 1)</scope>
    <source>
        <tissue>Brain</tissue>
    </source>
</reference>
<reference key="5">
    <citation type="journal article" date="2004" name="Genome Res.">
        <title>The status, quality, and expansion of the NIH full-length cDNA project: the Mammalian Gene Collection (MGC).</title>
        <authorList>
            <consortium name="The MGC Project Team"/>
        </authorList>
    </citation>
    <scope>NUCLEOTIDE SEQUENCE [LARGE SCALE MRNA] OF 303-1121 (ISOFORM 2)</scope>
    <source>
        <tissue>Brain</tissue>
    </source>
</reference>
<reference key="6">
    <citation type="journal article" date="1992" name="Mol. Cell. Biol.">
        <title>Novel member of the zinc finger superfamily: a C2-HC finger that recognizes a glia-specific gene.</title>
        <authorList>
            <person name="Kim J.G."/>
            <person name="Hudson L.D."/>
        </authorList>
    </citation>
    <scope>NUCLEOTIDE SEQUENCE [MRNA] OF 424-1121 (ISOFORM 2)</scope>
    <source>
        <tissue>Brain</tissue>
    </source>
</reference>
<reference key="7">
    <citation type="journal article" date="1995" name="Glia">
        <title>Expression of myelin transcription factor I (MyTI), a 'zinc-finger' DNA-binding protein, in developing oligodendrocytes.</title>
        <authorList>
            <person name="Armstrong R.C."/>
            <person name="Kim J.G."/>
            <person name="Hudson L.D."/>
        </authorList>
    </citation>
    <scope>TISSUE SPECIFICITY</scope>
</reference>
<reference key="8">
    <citation type="journal article" date="2003" name="Proc. Natl. Acad. Sci. U.S.A.">
        <title>The p53-inducible TSAP6 gene product regulates apoptosis and the cell cycle and interacts with Nix and the Myt1 kinase.</title>
        <authorList>
            <person name="Passer B.J."/>
            <person name="Nancy-Portebois V."/>
            <person name="Amzallag N."/>
            <person name="Prieur S."/>
            <person name="Cans C."/>
            <person name="Roborel de Climens A."/>
            <person name="Fiucci G."/>
            <person name="Bouvard V."/>
            <person name="Tuynder M."/>
            <person name="Susini L."/>
            <person name="Morchoisne S."/>
            <person name="Crible V."/>
            <person name="Lespagnol A."/>
            <person name="Dausset J."/>
            <person name="Oren M."/>
            <person name="Amson R."/>
            <person name="Telerman A."/>
        </authorList>
    </citation>
    <scope>INTERACTION WITH STEAP3</scope>
</reference>
<reference key="9">
    <citation type="journal article" date="2004" name="Mol. Cell. Neurosci.">
        <title>Myelin transcription factor 1 (Myt1) modulates the proliferation and differentiation of oligodendrocyte lineage cells.</title>
        <authorList>
            <person name="Nielsen J.A."/>
            <person name="Berndt J.A."/>
            <person name="Hudson L.D."/>
            <person name="Armstrong R.C."/>
        </authorList>
    </citation>
    <scope>FUNCTION</scope>
</reference>
<comment type="function">
    <text evidence="4">Binds to the promoter region of genes encoding proteolipid proteins of the central nervous system. May play a role in the development of neurons and oligodendroglia in the CNS. May regulate a critical transition point in oligodendrocyte lineage development by modulating oligodendrocyte progenitor proliferation relative to terminal differentiation and up-regulation of myelin gene transcription.</text>
</comment>
<comment type="subunit">
    <text evidence="3">Interacts with STEAP3.</text>
</comment>
<comment type="subcellular location">
    <subcellularLocation>
        <location>Nucleus</location>
    </subcellularLocation>
</comment>
<comment type="alternative products">
    <event type="alternative splicing"/>
    <isoform>
        <id>Q01538-1</id>
        <name>1</name>
        <sequence type="displayed"/>
    </isoform>
    <isoform>
        <id>Q01538-2</id>
        <name>2</name>
        <sequence type="described" ref="VSP_054313"/>
    </isoform>
</comment>
<comment type="tissue specificity">
    <text evidence="5">Mostly in developing nervous system. Expressed in neural progenitors and oligodendrocyte lineage cells. More highly expressed in oligodendrocyte progenitors than in differentiated oligodendrocytes.</text>
</comment>
<comment type="domain">
    <text>Contains 7 zinc fingers of the C2HC class arranged in two widely separated clusters. These two domains of DNA binding can function independently and recognize the same DNA sequence.</text>
</comment>
<comment type="similarity">
    <text evidence="8">Belongs to the MYT1 family.</text>
</comment>
<comment type="sequence caution" evidence="8">
    <conflict type="erroneous initiation">
        <sequence resource="EMBL-CDS" id="BAA74858"/>
    </conflict>
</comment>
<evidence type="ECO:0000255" key="1">
    <source>
        <dbReference type="PROSITE-ProRule" id="PRU01143"/>
    </source>
</evidence>
<evidence type="ECO:0000256" key="2">
    <source>
        <dbReference type="SAM" id="MobiDB-lite"/>
    </source>
</evidence>
<evidence type="ECO:0000269" key="3">
    <source>
    </source>
</evidence>
<evidence type="ECO:0000269" key="4">
    <source>
    </source>
</evidence>
<evidence type="ECO:0000269" key="5">
    <source>
    </source>
</evidence>
<evidence type="ECO:0000303" key="6">
    <source>
    </source>
</evidence>
<evidence type="ECO:0000303" key="7">
    <source>
    </source>
</evidence>
<evidence type="ECO:0000305" key="8"/>
<name>MYT1_HUMAN</name>